<reference key="1">
    <citation type="journal article" date="2010" name="PLoS Genet.">
        <title>Genome sequence of the plant growth promoting endophytic bacterium Enterobacter sp. 638.</title>
        <authorList>
            <person name="Taghavi S."/>
            <person name="van der Lelie D."/>
            <person name="Hoffman A."/>
            <person name="Zhang Y.B."/>
            <person name="Walla M.D."/>
            <person name="Vangronsveld J."/>
            <person name="Newman L."/>
            <person name="Monchy S."/>
        </authorList>
    </citation>
    <scope>NUCLEOTIDE SEQUENCE [LARGE SCALE GENOMIC DNA]</scope>
    <source>
        <strain>638</strain>
    </source>
</reference>
<keyword id="KW-0560">Oxidoreductase</keyword>
<keyword id="KW-0663">Pyridoxal phosphate</keyword>
<sequence length="957" mass="104745">MTQTLSQLENRGAFIERHIGPDAQQQQEMLKTVGADSLNALIGQIVPKDIQLATPPQVGEATTEFAALAELKAIAGLNKRFKSYIGMGYTPVQLPPVILRNMLENPGWYTAYTPYQPEVSQGRLEALLNFQQVTLDLTGLDIASASLLDEATAAAEAMAMAKRVSKLKNANRFFVAADVHPQTLDVVRTRAETFGFDVIVDDADKVLDHQDVFGVLLQQVGTTGEVHDYSALISELKSRKIIVSVAADFMALVLLTAPGKQGADIVFGSAQRFGVPMGYGGPHAAFFAGKDEFKRSMPGRIIGVSKDAAGNTALRMAMQTREQHIRREKANSNICTSQVLLANIASLYAVFHGPVGLKRIATRIHRFADILATGLQQKGLKLRHAHYFDTLCVEVADKAGVLARAEAAEINLRSDILNAVGITLDETTTREDVQNLFNVLLGDAHGLDVDALDKEVAHDSRSIQESMLRDDAILSHPVFNRHHSETEMMRYMHSLERKDLALNQAMIPLGSCTMKLNAAAEMIPITWPEFSELHPFCPADQAEGYHQMINQLSDWLVKLTGYDALCMQPNSGAQGEYAGLLAIRHYHESRNEGHRDICLIPSSAHGTNPASAQMAGMEVVVVACDKNGNIDLTDLRAKAEHAGEKLSCIMVTYPSTHGVYEETIREVCEIVHQFGGQVYLDGANMNAQVGITSPGFIGADVSHLNLHKTFCIPHGGGGPGMGPIGVKAHLAPFVPGHSVVQIEGMLTRQGAVSAAPFGSASILPISWMYIRMMGAEGLKQASQVAILNANYIATRLKDAYPVLYTGRDGRVAHECILDIRPLKDDTGISELDIAKRLIDYGFHAPTMSFPVAGTLMVEPTESESKVELDRFIEAMLAIRHEITRVKQGEWTLEDNPLVNAPHTQNELVAEWHHGYTREVAVFPAGMANKYWPTVKRLDDVYGDRNLFCSCVPMSEYQ</sequence>
<organism>
    <name type="scientific">Enterobacter sp. (strain 638)</name>
    <dbReference type="NCBI Taxonomy" id="399742"/>
    <lineage>
        <taxon>Bacteria</taxon>
        <taxon>Pseudomonadati</taxon>
        <taxon>Pseudomonadota</taxon>
        <taxon>Gammaproteobacteria</taxon>
        <taxon>Enterobacterales</taxon>
        <taxon>Enterobacteriaceae</taxon>
        <taxon>Enterobacter</taxon>
    </lineage>
</organism>
<dbReference type="EC" id="1.4.4.2" evidence="1"/>
<dbReference type="EMBL" id="CP000653">
    <property type="protein sequence ID" value="ABP61985.1"/>
    <property type="molecule type" value="Genomic_DNA"/>
</dbReference>
<dbReference type="RefSeq" id="WP_015960313.1">
    <property type="nucleotide sequence ID" value="NC_009436.1"/>
</dbReference>
<dbReference type="SMR" id="A4WE55"/>
<dbReference type="STRING" id="399742.Ent638_3322"/>
<dbReference type="KEGG" id="ent:Ent638_3322"/>
<dbReference type="eggNOG" id="COG0403">
    <property type="taxonomic scope" value="Bacteria"/>
</dbReference>
<dbReference type="eggNOG" id="COG1003">
    <property type="taxonomic scope" value="Bacteria"/>
</dbReference>
<dbReference type="HOGENOM" id="CLU_004620_3_2_6"/>
<dbReference type="OrthoDB" id="9801272at2"/>
<dbReference type="Proteomes" id="UP000000230">
    <property type="component" value="Chromosome"/>
</dbReference>
<dbReference type="GO" id="GO:0005829">
    <property type="term" value="C:cytosol"/>
    <property type="evidence" value="ECO:0007669"/>
    <property type="project" value="TreeGrafter"/>
</dbReference>
<dbReference type="GO" id="GO:0005960">
    <property type="term" value="C:glycine cleavage complex"/>
    <property type="evidence" value="ECO:0007669"/>
    <property type="project" value="TreeGrafter"/>
</dbReference>
<dbReference type="GO" id="GO:0016594">
    <property type="term" value="F:glycine binding"/>
    <property type="evidence" value="ECO:0007669"/>
    <property type="project" value="TreeGrafter"/>
</dbReference>
<dbReference type="GO" id="GO:0004375">
    <property type="term" value="F:glycine dehydrogenase (decarboxylating) activity"/>
    <property type="evidence" value="ECO:0007669"/>
    <property type="project" value="UniProtKB-EC"/>
</dbReference>
<dbReference type="GO" id="GO:0030170">
    <property type="term" value="F:pyridoxal phosphate binding"/>
    <property type="evidence" value="ECO:0007669"/>
    <property type="project" value="TreeGrafter"/>
</dbReference>
<dbReference type="GO" id="GO:0019464">
    <property type="term" value="P:glycine decarboxylation via glycine cleavage system"/>
    <property type="evidence" value="ECO:0007669"/>
    <property type="project" value="UniProtKB-UniRule"/>
</dbReference>
<dbReference type="CDD" id="cd00613">
    <property type="entry name" value="GDC-P"/>
    <property type="match status" value="2"/>
</dbReference>
<dbReference type="FunFam" id="3.40.640.10:FF:000005">
    <property type="entry name" value="Glycine dehydrogenase (decarboxylating), mitochondrial"/>
    <property type="match status" value="1"/>
</dbReference>
<dbReference type="FunFam" id="3.90.1150.10:FF:000007">
    <property type="entry name" value="Glycine dehydrogenase (decarboxylating), mitochondrial"/>
    <property type="match status" value="1"/>
</dbReference>
<dbReference type="FunFam" id="3.40.640.10:FF:000007">
    <property type="entry name" value="glycine dehydrogenase (Decarboxylating), mitochondrial"/>
    <property type="match status" value="1"/>
</dbReference>
<dbReference type="Gene3D" id="3.90.1150.10">
    <property type="entry name" value="Aspartate Aminotransferase, domain 1"/>
    <property type="match status" value="1"/>
</dbReference>
<dbReference type="Gene3D" id="3.40.640.10">
    <property type="entry name" value="Type I PLP-dependent aspartate aminotransferase-like (Major domain)"/>
    <property type="match status" value="2"/>
</dbReference>
<dbReference type="HAMAP" id="MF_00711">
    <property type="entry name" value="GcvP"/>
    <property type="match status" value="1"/>
</dbReference>
<dbReference type="InterPro" id="IPR003437">
    <property type="entry name" value="GcvP"/>
</dbReference>
<dbReference type="InterPro" id="IPR049316">
    <property type="entry name" value="GDC-P_C"/>
</dbReference>
<dbReference type="InterPro" id="IPR049315">
    <property type="entry name" value="GDC-P_N"/>
</dbReference>
<dbReference type="InterPro" id="IPR020581">
    <property type="entry name" value="GDC_P"/>
</dbReference>
<dbReference type="InterPro" id="IPR015424">
    <property type="entry name" value="PyrdxlP-dep_Trfase"/>
</dbReference>
<dbReference type="InterPro" id="IPR015421">
    <property type="entry name" value="PyrdxlP-dep_Trfase_major"/>
</dbReference>
<dbReference type="InterPro" id="IPR015422">
    <property type="entry name" value="PyrdxlP-dep_Trfase_small"/>
</dbReference>
<dbReference type="NCBIfam" id="TIGR00461">
    <property type="entry name" value="gcvP"/>
    <property type="match status" value="1"/>
</dbReference>
<dbReference type="NCBIfam" id="NF003346">
    <property type="entry name" value="PRK04366.1"/>
    <property type="match status" value="1"/>
</dbReference>
<dbReference type="PANTHER" id="PTHR11773:SF13">
    <property type="entry name" value="GLYCINE DEHYDROGENASE (DECARBOXYLATING)"/>
    <property type="match status" value="1"/>
</dbReference>
<dbReference type="PANTHER" id="PTHR11773">
    <property type="entry name" value="GLYCINE DEHYDROGENASE, DECARBOXYLATING"/>
    <property type="match status" value="1"/>
</dbReference>
<dbReference type="Pfam" id="PF21478">
    <property type="entry name" value="GcvP2_C"/>
    <property type="match status" value="1"/>
</dbReference>
<dbReference type="Pfam" id="PF02347">
    <property type="entry name" value="GDC-P"/>
    <property type="match status" value="2"/>
</dbReference>
<dbReference type="SUPFAM" id="SSF53383">
    <property type="entry name" value="PLP-dependent transferases"/>
    <property type="match status" value="2"/>
</dbReference>
<proteinExistence type="inferred from homology"/>
<evidence type="ECO:0000255" key="1">
    <source>
        <dbReference type="HAMAP-Rule" id="MF_00711"/>
    </source>
</evidence>
<protein>
    <recommendedName>
        <fullName evidence="1">Glycine dehydrogenase (decarboxylating)</fullName>
        <ecNumber evidence="1">1.4.4.2</ecNumber>
    </recommendedName>
    <alternativeName>
        <fullName evidence="1">Glycine cleavage system P-protein</fullName>
    </alternativeName>
    <alternativeName>
        <fullName evidence="1">Glycine decarboxylase</fullName>
    </alternativeName>
    <alternativeName>
        <fullName evidence="1">Glycine dehydrogenase (aminomethyl-transferring)</fullName>
    </alternativeName>
</protein>
<accession>A4WE55</accession>
<name>GCSP_ENT38</name>
<comment type="function">
    <text evidence="1">The glycine cleavage system catalyzes the degradation of glycine. The P protein binds the alpha-amino group of glycine through its pyridoxal phosphate cofactor; CO(2) is released and the remaining methylamine moiety is then transferred to the lipoamide cofactor of the H protein.</text>
</comment>
<comment type="catalytic activity">
    <reaction evidence="1">
        <text>N(6)-[(R)-lipoyl]-L-lysyl-[glycine-cleavage complex H protein] + glycine + H(+) = N(6)-[(R)-S(8)-aminomethyldihydrolipoyl]-L-lysyl-[glycine-cleavage complex H protein] + CO2</text>
        <dbReference type="Rhea" id="RHEA:24304"/>
        <dbReference type="Rhea" id="RHEA-COMP:10494"/>
        <dbReference type="Rhea" id="RHEA-COMP:10495"/>
        <dbReference type="ChEBI" id="CHEBI:15378"/>
        <dbReference type="ChEBI" id="CHEBI:16526"/>
        <dbReference type="ChEBI" id="CHEBI:57305"/>
        <dbReference type="ChEBI" id="CHEBI:83099"/>
        <dbReference type="ChEBI" id="CHEBI:83143"/>
        <dbReference type="EC" id="1.4.4.2"/>
    </reaction>
</comment>
<comment type="cofactor">
    <cofactor evidence="1">
        <name>pyridoxal 5'-phosphate</name>
        <dbReference type="ChEBI" id="CHEBI:597326"/>
    </cofactor>
</comment>
<comment type="subunit">
    <text evidence="1">The glycine cleavage system is composed of four proteins: P, T, L and H.</text>
</comment>
<comment type="similarity">
    <text evidence="1">Belongs to the GcvP family.</text>
</comment>
<gene>
    <name evidence="1" type="primary">gcvP</name>
    <name type="ordered locus">Ent638_3322</name>
</gene>
<feature type="chain" id="PRO_1000062076" description="Glycine dehydrogenase (decarboxylating)">
    <location>
        <begin position="1"/>
        <end position="957"/>
    </location>
</feature>
<feature type="modified residue" description="N6-(pyridoxal phosphate)lysine" evidence="1">
    <location>
        <position position="708"/>
    </location>
</feature>